<organism>
    <name type="scientific">Homo sapiens</name>
    <name type="common">Human</name>
    <dbReference type="NCBI Taxonomy" id="9606"/>
    <lineage>
        <taxon>Eukaryota</taxon>
        <taxon>Metazoa</taxon>
        <taxon>Chordata</taxon>
        <taxon>Craniata</taxon>
        <taxon>Vertebrata</taxon>
        <taxon>Euteleostomi</taxon>
        <taxon>Mammalia</taxon>
        <taxon>Eutheria</taxon>
        <taxon>Euarchontoglires</taxon>
        <taxon>Primates</taxon>
        <taxon>Haplorrhini</taxon>
        <taxon>Catarrhini</taxon>
        <taxon>Hominidae</taxon>
        <taxon>Homo</taxon>
    </lineage>
</organism>
<dbReference type="EC" id="3.6.5.-" evidence="3 7"/>
<dbReference type="EMBL" id="AB044661">
    <property type="protein sequence ID" value="BAB17612.1"/>
    <property type="molecule type" value="mRNA"/>
</dbReference>
<dbReference type="EMBL" id="AK298827">
    <property type="protein sequence ID" value="BAG60957.1"/>
    <property type="molecule type" value="mRNA"/>
</dbReference>
<dbReference type="EMBL" id="AK298866">
    <property type="protein sequence ID" value="BAG60986.1"/>
    <property type="molecule type" value="mRNA"/>
</dbReference>
<dbReference type="EMBL" id="AK302131">
    <property type="protein sequence ID" value="BAG63506.1"/>
    <property type="molecule type" value="mRNA"/>
</dbReference>
<dbReference type="EMBL" id="AK310340">
    <property type="status" value="NOT_ANNOTATED_CDS"/>
    <property type="molecule type" value="mRNA"/>
</dbReference>
<dbReference type="EMBL" id="AK316404">
    <property type="protein sequence ID" value="BAH14775.1"/>
    <property type="molecule type" value="mRNA"/>
</dbReference>
<dbReference type="EMBL" id="AC074091">
    <property type="status" value="NOT_ANNOTATED_CDS"/>
    <property type="molecule type" value="Genomic_DNA"/>
</dbReference>
<dbReference type="EMBL" id="BC007451">
    <property type="protein sequence ID" value="AAH07451.1"/>
    <property type="molecule type" value="mRNA"/>
</dbReference>
<dbReference type="EMBL" id="AJ010842">
    <property type="protein sequence ID" value="CAA09376.1"/>
    <property type="molecule type" value="mRNA"/>
</dbReference>
<dbReference type="CCDS" id="CCDS1760.3">
    <molecule id="Q9HCN4-1"/>
</dbReference>
<dbReference type="CCDS" id="CCDS46248.1">
    <molecule id="Q9HCN4-4"/>
</dbReference>
<dbReference type="CCDS" id="CCDS46249.1">
    <molecule id="Q9HCN4-3"/>
</dbReference>
<dbReference type="CCDS" id="CCDS46250.1">
    <molecule id="Q9HCN4-2"/>
</dbReference>
<dbReference type="RefSeq" id="NP_001138519.1">
    <molecule id="Q9HCN4-4"/>
    <property type="nucleotide sequence ID" value="NM_001145047.2"/>
</dbReference>
<dbReference type="RefSeq" id="NP_001138520.1">
    <molecule id="Q9HCN4-2"/>
    <property type="nucleotide sequence ID" value="NM_001145048.2"/>
</dbReference>
<dbReference type="RefSeq" id="NP_001138521.1">
    <molecule id="Q9HCN4-3"/>
    <property type="nucleotide sequence ID" value="NM_001145049.2"/>
</dbReference>
<dbReference type="RefSeq" id="NP_009197.3">
    <molecule id="Q9HCN4-1"/>
    <property type="nucleotide sequence ID" value="NM_007266.4"/>
</dbReference>
<dbReference type="SMR" id="Q9HCN4"/>
<dbReference type="BioGRID" id="116452">
    <property type="interactions" value="139"/>
</dbReference>
<dbReference type="CORUM" id="Q9HCN4"/>
<dbReference type="FunCoup" id="Q9HCN4">
    <property type="interactions" value="3856"/>
</dbReference>
<dbReference type="IntAct" id="Q9HCN4">
    <property type="interactions" value="67"/>
</dbReference>
<dbReference type="MINT" id="Q9HCN4"/>
<dbReference type="STRING" id="9606.ENSP00000264718"/>
<dbReference type="iPTMnet" id="Q9HCN4"/>
<dbReference type="MetOSite" id="Q9HCN4"/>
<dbReference type="PhosphoSitePlus" id="Q9HCN4"/>
<dbReference type="BioMuta" id="GPN1"/>
<dbReference type="DMDM" id="34925430"/>
<dbReference type="CPTAC" id="CPTAC-1027"/>
<dbReference type="jPOST" id="Q9HCN4"/>
<dbReference type="MassIVE" id="Q9HCN4"/>
<dbReference type="PaxDb" id="9606-ENSP00000264718"/>
<dbReference type="PeptideAtlas" id="Q9HCN4"/>
<dbReference type="ProteomicsDB" id="5961"/>
<dbReference type="ProteomicsDB" id="81775">
    <molecule id="Q9HCN4-1"/>
</dbReference>
<dbReference type="ProteomicsDB" id="81776">
    <molecule id="Q9HCN4-2"/>
</dbReference>
<dbReference type="ProteomicsDB" id="81777">
    <molecule id="Q9HCN4-3"/>
</dbReference>
<dbReference type="Pumba" id="Q9HCN4"/>
<dbReference type="Antibodypedia" id="13832">
    <property type="antibodies" value="205 antibodies from 29 providers"/>
</dbReference>
<dbReference type="DNASU" id="11321"/>
<dbReference type="Ensembl" id="ENST00000264718.7">
    <molecule id="Q9HCN4-5"/>
    <property type="protein sequence ID" value="ENSP00000264718.3"/>
    <property type="gene ID" value="ENSG00000198522.14"/>
</dbReference>
<dbReference type="Ensembl" id="ENST00000407583.7">
    <molecule id="Q9HCN4-4"/>
    <property type="protein sequence ID" value="ENSP00000384255.3"/>
    <property type="gene ID" value="ENSG00000198522.14"/>
</dbReference>
<dbReference type="Ensembl" id="ENST00000424214.5">
    <molecule id="Q9HCN4-2"/>
    <property type="protein sequence ID" value="ENSP00000398115.1"/>
    <property type="gene ID" value="ENSG00000198522.14"/>
</dbReference>
<dbReference type="Ensembl" id="ENST00000458167.6">
    <molecule id="Q9HCN4-3"/>
    <property type="protein sequence ID" value="ENSP00000412170.2"/>
    <property type="gene ID" value="ENSG00000198522.14"/>
</dbReference>
<dbReference type="Ensembl" id="ENST00000503738.5">
    <molecule id="Q9HCN4-3"/>
    <property type="protein sequence ID" value="ENSP00000427269.1"/>
    <property type="gene ID" value="ENSG00000198522.14"/>
</dbReference>
<dbReference type="Ensembl" id="ENST00000515877.5">
    <molecule id="Q9HCN4-2"/>
    <property type="protein sequence ID" value="ENSP00000424678.1"/>
    <property type="gene ID" value="ENSG00000198522.14"/>
</dbReference>
<dbReference type="Ensembl" id="ENST00000610189.2">
    <molecule id="Q9HCN4-1"/>
    <property type="protein sequence ID" value="ENSP00000476446.1"/>
    <property type="gene ID" value="ENSG00000198522.14"/>
</dbReference>
<dbReference type="Ensembl" id="ENST00000616939.4">
    <molecule id="Q9HCN4-5"/>
    <property type="protein sequence ID" value="ENSP00000484680.1"/>
    <property type="gene ID" value="ENSG00000198522.14"/>
</dbReference>
<dbReference type="GeneID" id="11321"/>
<dbReference type="KEGG" id="hsa:11321"/>
<dbReference type="MANE-Select" id="ENST00000610189.2">
    <property type="protein sequence ID" value="ENSP00000476446.1"/>
    <property type="RefSeq nucleotide sequence ID" value="NM_007266.4"/>
    <property type="RefSeq protein sequence ID" value="NP_009197.3"/>
</dbReference>
<dbReference type="UCSC" id="uc010ezf.4">
    <molecule id="Q9HCN4-1"/>
    <property type="organism name" value="human"/>
</dbReference>
<dbReference type="AGR" id="HGNC:17030"/>
<dbReference type="CTD" id="11321"/>
<dbReference type="DisGeNET" id="11321"/>
<dbReference type="GeneCards" id="GPN1"/>
<dbReference type="HGNC" id="HGNC:17030">
    <property type="gene designation" value="GPN1"/>
</dbReference>
<dbReference type="HPA" id="ENSG00000198522">
    <property type="expression patterns" value="Low tissue specificity"/>
</dbReference>
<dbReference type="MIM" id="611479">
    <property type="type" value="gene"/>
</dbReference>
<dbReference type="neXtProt" id="NX_Q9HCN4"/>
<dbReference type="OpenTargets" id="ENSG00000198522"/>
<dbReference type="PharmGKB" id="PA162390148"/>
<dbReference type="VEuPathDB" id="HostDB:ENSG00000198522"/>
<dbReference type="eggNOG" id="KOG1532">
    <property type="taxonomic scope" value="Eukaryota"/>
</dbReference>
<dbReference type="GeneTree" id="ENSGT00950000183172"/>
<dbReference type="HOGENOM" id="CLU_037460_1_2_1"/>
<dbReference type="InParanoid" id="Q9HCN4"/>
<dbReference type="OrthoDB" id="243313at2759"/>
<dbReference type="PAN-GO" id="Q9HCN4">
    <property type="GO annotations" value="1 GO annotation based on evolutionary models"/>
</dbReference>
<dbReference type="PhylomeDB" id="Q9HCN4"/>
<dbReference type="TreeFam" id="TF313204"/>
<dbReference type="PathwayCommons" id="Q9HCN4"/>
<dbReference type="SignaLink" id="Q9HCN4"/>
<dbReference type="BioGRID-ORCS" id="11321">
    <property type="hits" value="795 hits in 1174 CRISPR screens"/>
</dbReference>
<dbReference type="ChiTaRS" id="GPN1">
    <property type="organism name" value="human"/>
</dbReference>
<dbReference type="GenomeRNAi" id="11321"/>
<dbReference type="Pharos" id="Q9HCN4">
    <property type="development level" value="Tbio"/>
</dbReference>
<dbReference type="PRO" id="PR:Q9HCN4"/>
<dbReference type="Proteomes" id="UP000005640">
    <property type="component" value="Chromosome 2"/>
</dbReference>
<dbReference type="RNAct" id="Q9HCN4">
    <property type="molecule type" value="protein"/>
</dbReference>
<dbReference type="Bgee" id="ENSG00000198522">
    <property type="expression patterns" value="Expressed in islet of Langerhans and 208 other cell types or tissues"/>
</dbReference>
<dbReference type="ExpressionAtlas" id="Q9HCN4">
    <property type="expression patterns" value="baseline and differential"/>
</dbReference>
<dbReference type="GO" id="GO:0005829">
    <property type="term" value="C:cytosol"/>
    <property type="evidence" value="ECO:0000314"/>
    <property type="project" value="HPA"/>
</dbReference>
<dbReference type="GO" id="GO:0005739">
    <property type="term" value="C:mitochondrion"/>
    <property type="evidence" value="ECO:0000314"/>
    <property type="project" value="HPA"/>
</dbReference>
<dbReference type="GO" id="GO:0005654">
    <property type="term" value="C:nucleoplasm"/>
    <property type="evidence" value="ECO:0000314"/>
    <property type="project" value="HPA"/>
</dbReference>
<dbReference type="GO" id="GO:0016887">
    <property type="term" value="F:ATP hydrolysis activity"/>
    <property type="evidence" value="ECO:0007669"/>
    <property type="project" value="InterPro"/>
</dbReference>
<dbReference type="GO" id="GO:0005525">
    <property type="term" value="F:GTP binding"/>
    <property type="evidence" value="ECO:0007669"/>
    <property type="project" value="UniProtKB-KW"/>
</dbReference>
<dbReference type="GO" id="GO:0003924">
    <property type="term" value="F:GTPase activity"/>
    <property type="evidence" value="ECO:0000318"/>
    <property type="project" value="GO_Central"/>
</dbReference>
<dbReference type="CDD" id="cd17870">
    <property type="entry name" value="GPN1"/>
    <property type="match status" value="1"/>
</dbReference>
<dbReference type="FunFam" id="3.40.50.300:FF:000696">
    <property type="entry name" value="GPN-loop GTPase"/>
    <property type="match status" value="1"/>
</dbReference>
<dbReference type="Gene3D" id="3.40.50.300">
    <property type="entry name" value="P-loop containing nucleotide triphosphate hydrolases"/>
    <property type="match status" value="1"/>
</dbReference>
<dbReference type="InterPro" id="IPR003593">
    <property type="entry name" value="AAA+_ATPase"/>
</dbReference>
<dbReference type="InterPro" id="IPR004130">
    <property type="entry name" value="Gpn"/>
</dbReference>
<dbReference type="InterPro" id="IPR030230">
    <property type="entry name" value="Gpn1/Npa3/XAB1"/>
</dbReference>
<dbReference type="InterPro" id="IPR027417">
    <property type="entry name" value="P-loop_NTPase"/>
</dbReference>
<dbReference type="PANTHER" id="PTHR21231:SF8">
    <property type="entry name" value="GPN-LOOP GTPASE 1"/>
    <property type="match status" value="1"/>
</dbReference>
<dbReference type="PANTHER" id="PTHR21231">
    <property type="entry name" value="XPA-BINDING PROTEIN 1-RELATED"/>
    <property type="match status" value="1"/>
</dbReference>
<dbReference type="Pfam" id="PF03029">
    <property type="entry name" value="ATP_bind_1"/>
    <property type="match status" value="1"/>
</dbReference>
<dbReference type="SMART" id="SM00382">
    <property type="entry name" value="AAA"/>
    <property type="match status" value="1"/>
</dbReference>
<dbReference type="SUPFAM" id="SSF52540">
    <property type="entry name" value="P-loop containing nucleoside triphosphate hydrolases"/>
    <property type="match status" value="1"/>
</dbReference>
<evidence type="ECO:0000250" key="1">
    <source>
        <dbReference type="UniProtKB" id="Q9UYR9"/>
    </source>
</evidence>
<evidence type="ECO:0000256" key="2">
    <source>
        <dbReference type="SAM" id="MobiDB-lite"/>
    </source>
</evidence>
<evidence type="ECO:0000269" key="3">
    <source>
    </source>
</evidence>
<evidence type="ECO:0000269" key="4">
    <source>
    </source>
</evidence>
<evidence type="ECO:0000269" key="5">
    <source>
    </source>
</evidence>
<evidence type="ECO:0000269" key="6">
    <source>
    </source>
</evidence>
<evidence type="ECO:0000269" key="7">
    <source>
    </source>
</evidence>
<evidence type="ECO:0000269" key="8">
    <source>
    </source>
</evidence>
<evidence type="ECO:0000269" key="9">
    <source ref="5"/>
</evidence>
<evidence type="ECO:0000303" key="10">
    <source>
    </source>
</evidence>
<evidence type="ECO:0000303" key="11">
    <source>
    </source>
</evidence>
<evidence type="ECO:0000303" key="12">
    <source>
    </source>
</evidence>
<evidence type="ECO:0000305" key="13"/>
<evidence type="ECO:0000305" key="14">
    <source>
    </source>
</evidence>
<evidence type="ECO:0000312" key="15">
    <source>
        <dbReference type="HGNC" id="HGNC:17030"/>
    </source>
</evidence>
<evidence type="ECO:0007744" key="16">
    <source>
    </source>
</evidence>
<evidence type="ECO:0007744" key="17">
    <source>
    </source>
</evidence>
<evidence type="ECO:0007744" key="18">
    <source>
    </source>
</evidence>
<evidence type="ECO:0007744" key="19">
    <source>
    </source>
</evidence>
<evidence type="ECO:0007744" key="20">
    <source>
    </source>
</evidence>
<evidence type="ECO:0007744" key="21">
    <source>
    </source>
</evidence>
<evidence type="ECO:0007744" key="22">
    <source>
    </source>
</evidence>
<protein>
    <recommendedName>
        <fullName evidence="12">GPN-loop GTPase 1</fullName>
        <ecNumber evidence="3 7">3.6.5.-</ecNumber>
    </recommendedName>
    <alternativeName>
        <fullName>MBD2-interacting protein</fullName>
        <shortName>MBDin</shortName>
    </alternativeName>
    <alternativeName>
        <fullName evidence="12">RNAPII-associated protein 4</fullName>
    </alternativeName>
    <alternativeName>
        <fullName evidence="10">XPA-binding protein 1</fullName>
    </alternativeName>
</protein>
<keyword id="KW-0007">Acetylation</keyword>
<keyword id="KW-0025">Alternative splicing</keyword>
<keyword id="KW-0963">Cytoplasm</keyword>
<keyword id="KW-0903">Direct protein sequencing</keyword>
<keyword id="KW-0342">GTP-binding</keyword>
<keyword id="KW-0378">Hydrolase</keyword>
<keyword id="KW-0547">Nucleotide-binding</keyword>
<keyword id="KW-0539">Nucleus</keyword>
<keyword id="KW-0597">Phosphoprotein</keyword>
<keyword id="KW-1267">Proteomics identification</keyword>
<keyword id="KW-1185">Reference proteome</keyword>
<proteinExistence type="evidence at protein level"/>
<feature type="initiator methionine" description="Removed" evidence="9 19 20">
    <location>
        <position position="1"/>
    </location>
</feature>
<feature type="chain" id="PRO_0000066001" description="GPN-loop GTPase 1">
    <location>
        <begin position="2"/>
        <end position="374"/>
    </location>
</feature>
<feature type="region of interest" description="Disordered" evidence="2">
    <location>
        <begin position="326"/>
        <end position="354"/>
    </location>
</feature>
<feature type="short sequence motif" description="Gly-Pro-Asn (GPN)-loop; involved in dimer interface" evidence="1">
    <location>
        <begin position="86"/>
        <end position="88"/>
    </location>
</feature>
<feature type="compositionally biased region" description="Acidic residues" evidence="2">
    <location>
        <begin position="330"/>
        <end position="342"/>
    </location>
</feature>
<feature type="compositionally biased region" description="Basic and acidic residues" evidence="2">
    <location>
        <begin position="343"/>
        <end position="354"/>
    </location>
</feature>
<feature type="binding site" evidence="1">
    <location>
        <begin position="29"/>
        <end position="34"/>
    </location>
    <ligand>
        <name>GTP</name>
        <dbReference type="ChEBI" id="CHEBI:37565"/>
    </ligand>
</feature>
<feature type="binding site" evidence="1">
    <location>
        <begin position="189"/>
        <end position="192"/>
    </location>
    <ligand>
        <name>GTP</name>
        <dbReference type="ChEBI" id="CHEBI:37565"/>
    </ligand>
</feature>
<feature type="site" description="Stabilizes the phosphate intermediate; shared with dimeric partner" evidence="1">
    <location>
        <position position="88"/>
    </location>
</feature>
<feature type="modified residue" description="N-acetylalanine" evidence="9 19 20">
    <location>
        <position position="2"/>
    </location>
</feature>
<feature type="modified residue" description="Phosphoserine" evidence="21">
    <location>
        <position position="301"/>
    </location>
</feature>
<feature type="modified residue" description="Phosphoserine" evidence="16 22">
    <location>
        <position position="312"/>
    </location>
</feature>
<feature type="modified residue" description="Phosphoserine" evidence="16 17 18 21">
    <location>
        <position position="314"/>
    </location>
</feature>
<feature type="modified residue" description="Phosphothreonine" evidence="22">
    <location>
        <position position="328"/>
    </location>
</feature>
<feature type="modified residue" description="Phosphoserine" evidence="16 17 18 22">
    <location>
        <position position="338"/>
    </location>
</feature>
<feature type="modified residue" description="Phosphothreonine" evidence="21 22">
    <location>
        <position position="340"/>
    </location>
</feature>
<feature type="splice variant" id="VSP_042749" description="In isoform 3." evidence="11">
    <original>MAASAAAAELQASGGPRHPVCLLVLGMAGSGKTTFVQRLTGHLHAQGTPPYVINLDPAVHEVPFPANIDIRDTVKYKEVMKQYGLGPNGGIVTSLNLFATRFDQ</original>
    <variation>MKFPFLPIL</variation>
    <location>
        <begin position="1"/>
        <end position="104"/>
    </location>
</feature>
<feature type="splice variant" id="VSP_042750" description="In isoform 2." evidence="11">
    <location>
        <begin position="1"/>
        <end position="79"/>
    </location>
</feature>
<feature type="splice variant" id="VSP_046176" description="In isoform 4." evidence="11">
    <original>MAASAAAAELQASGGPRHPVCLLVLGMAGSGKTTFVQ</original>
    <variation>MTGHTRSSLPRCTGIVLLIKLRFSE</variation>
    <location>
        <begin position="1"/>
        <end position="37"/>
    </location>
</feature>
<feature type="splice variant" id="VSP_054366" description="In isoform 5." evidence="11">
    <original>M</original>
    <variation>MRCLYGRVGGARRKM</variation>
    <location>
        <position position="1"/>
    </location>
</feature>
<feature type="mutagenesis site" description="Abolishes GTPase activity and decreases association with GPN3." evidence="7">
    <original>GSGK</original>
    <variation>AAAA</variation>
    <location>
        <begin position="29"/>
        <end position="32"/>
    </location>
</feature>
<name>GPN1_HUMAN</name>
<gene>
    <name evidence="12 15" type="primary">GPN1</name>
    <name type="synonym">MBDIN</name>
    <name evidence="12" type="synonym">RPAP4</name>
    <name evidence="10" type="synonym">XAB1</name>
    <name type="ORF">HUSSY-23</name>
</gene>
<reference key="1">
    <citation type="journal article" date="2000" name="Nucleic Acids Res.">
        <title>A novel cytoplasmic GTPase XAB1 interacts with DNA repair protein XPA.</title>
        <authorList>
            <person name="Nitta M."/>
            <person name="Saijo M."/>
            <person name="Kodo N."/>
            <person name="Matsuda T."/>
            <person name="Nakastu Y."/>
            <person name="Tamai H."/>
            <person name="Tanaka K."/>
        </authorList>
    </citation>
    <scope>NUCLEOTIDE SEQUENCE [MRNA] (ISOFORM 1)</scope>
    <scope>INTERACTION WITH XPA</scope>
    <scope>SUBCELLULAR LOCATION</scope>
    <scope>CATALYTIC ACTIVITY</scope>
    <source>
        <tissue>Cervix carcinoma</tissue>
    </source>
</reference>
<reference key="2">
    <citation type="journal article" date="2004" name="Nat. Genet.">
        <title>Complete sequencing and characterization of 21,243 full-length human cDNAs.</title>
        <authorList>
            <person name="Ota T."/>
            <person name="Suzuki Y."/>
            <person name="Nishikawa T."/>
            <person name="Otsuki T."/>
            <person name="Sugiyama T."/>
            <person name="Irie R."/>
            <person name="Wakamatsu A."/>
            <person name="Hayashi K."/>
            <person name="Sato H."/>
            <person name="Nagai K."/>
            <person name="Kimura K."/>
            <person name="Makita H."/>
            <person name="Sekine M."/>
            <person name="Obayashi M."/>
            <person name="Nishi T."/>
            <person name="Shibahara T."/>
            <person name="Tanaka T."/>
            <person name="Ishii S."/>
            <person name="Yamamoto J."/>
            <person name="Saito K."/>
            <person name="Kawai Y."/>
            <person name="Isono Y."/>
            <person name="Nakamura Y."/>
            <person name="Nagahari K."/>
            <person name="Murakami K."/>
            <person name="Yasuda T."/>
            <person name="Iwayanagi T."/>
            <person name="Wagatsuma M."/>
            <person name="Shiratori A."/>
            <person name="Sudo H."/>
            <person name="Hosoiri T."/>
            <person name="Kaku Y."/>
            <person name="Kodaira H."/>
            <person name="Kondo H."/>
            <person name="Sugawara M."/>
            <person name="Takahashi M."/>
            <person name="Kanda K."/>
            <person name="Yokoi T."/>
            <person name="Furuya T."/>
            <person name="Kikkawa E."/>
            <person name="Omura Y."/>
            <person name="Abe K."/>
            <person name="Kamihara K."/>
            <person name="Katsuta N."/>
            <person name="Sato K."/>
            <person name="Tanikawa M."/>
            <person name="Yamazaki M."/>
            <person name="Ninomiya K."/>
            <person name="Ishibashi T."/>
            <person name="Yamashita H."/>
            <person name="Murakawa K."/>
            <person name="Fujimori K."/>
            <person name="Tanai H."/>
            <person name="Kimata M."/>
            <person name="Watanabe M."/>
            <person name="Hiraoka S."/>
            <person name="Chiba Y."/>
            <person name="Ishida S."/>
            <person name="Ono Y."/>
            <person name="Takiguchi S."/>
            <person name="Watanabe S."/>
            <person name="Yosida M."/>
            <person name="Hotuta T."/>
            <person name="Kusano J."/>
            <person name="Kanehori K."/>
            <person name="Takahashi-Fujii A."/>
            <person name="Hara H."/>
            <person name="Tanase T.-O."/>
            <person name="Nomura Y."/>
            <person name="Togiya S."/>
            <person name="Komai F."/>
            <person name="Hara R."/>
            <person name="Takeuchi K."/>
            <person name="Arita M."/>
            <person name="Imose N."/>
            <person name="Musashino K."/>
            <person name="Yuuki H."/>
            <person name="Oshima A."/>
            <person name="Sasaki N."/>
            <person name="Aotsuka S."/>
            <person name="Yoshikawa Y."/>
            <person name="Matsunawa H."/>
            <person name="Ichihara T."/>
            <person name="Shiohata N."/>
            <person name="Sano S."/>
            <person name="Moriya S."/>
            <person name="Momiyama H."/>
            <person name="Satoh N."/>
            <person name="Takami S."/>
            <person name="Terashima Y."/>
            <person name="Suzuki O."/>
            <person name="Nakagawa S."/>
            <person name="Senoh A."/>
            <person name="Mizoguchi H."/>
            <person name="Goto Y."/>
            <person name="Shimizu F."/>
            <person name="Wakebe H."/>
            <person name="Hishigaki H."/>
            <person name="Watanabe T."/>
            <person name="Sugiyama A."/>
            <person name="Takemoto M."/>
            <person name="Kawakami B."/>
            <person name="Yamazaki M."/>
            <person name="Watanabe K."/>
            <person name="Kumagai A."/>
            <person name="Itakura S."/>
            <person name="Fukuzumi Y."/>
            <person name="Fujimori Y."/>
            <person name="Komiyama M."/>
            <person name="Tashiro H."/>
            <person name="Tanigami A."/>
            <person name="Fujiwara T."/>
            <person name="Ono T."/>
            <person name="Yamada K."/>
            <person name="Fujii Y."/>
            <person name="Ozaki K."/>
            <person name="Hirao M."/>
            <person name="Ohmori Y."/>
            <person name="Kawabata A."/>
            <person name="Hikiji T."/>
            <person name="Kobatake N."/>
            <person name="Inagaki H."/>
            <person name="Ikema Y."/>
            <person name="Okamoto S."/>
            <person name="Okitani R."/>
            <person name="Kawakami T."/>
            <person name="Noguchi S."/>
            <person name="Itoh T."/>
            <person name="Shigeta K."/>
            <person name="Senba T."/>
            <person name="Matsumura K."/>
            <person name="Nakajima Y."/>
            <person name="Mizuno T."/>
            <person name="Morinaga M."/>
            <person name="Sasaki M."/>
            <person name="Togashi T."/>
            <person name="Oyama M."/>
            <person name="Hata H."/>
            <person name="Watanabe M."/>
            <person name="Komatsu T."/>
            <person name="Mizushima-Sugano J."/>
            <person name="Satoh T."/>
            <person name="Shirai Y."/>
            <person name="Takahashi Y."/>
            <person name="Nakagawa K."/>
            <person name="Okumura K."/>
            <person name="Nagase T."/>
            <person name="Nomura N."/>
            <person name="Kikuchi H."/>
            <person name="Masuho Y."/>
            <person name="Yamashita R."/>
            <person name="Nakai K."/>
            <person name="Yada T."/>
            <person name="Nakamura Y."/>
            <person name="Ohara O."/>
            <person name="Isogai T."/>
            <person name="Sugano S."/>
        </authorList>
    </citation>
    <scope>NUCLEOTIDE SEQUENCE [LARGE SCALE MRNA] (ISOFORMS 2; 3; 4 AND 5)</scope>
    <source>
        <tissue>Testis</tissue>
    </source>
</reference>
<reference key="3">
    <citation type="journal article" date="2005" name="Nature">
        <title>Generation and annotation of the DNA sequences of human chromosomes 2 and 4.</title>
        <authorList>
            <person name="Hillier L.W."/>
            <person name="Graves T.A."/>
            <person name="Fulton R.S."/>
            <person name="Fulton L.A."/>
            <person name="Pepin K.H."/>
            <person name="Minx P."/>
            <person name="Wagner-McPherson C."/>
            <person name="Layman D."/>
            <person name="Wylie K."/>
            <person name="Sekhon M."/>
            <person name="Becker M.C."/>
            <person name="Fewell G.A."/>
            <person name="Delehaunty K.D."/>
            <person name="Miner T.L."/>
            <person name="Nash W.E."/>
            <person name="Kremitzki C."/>
            <person name="Oddy L."/>
            <person name="Du H."/>
            <person name="Sun H."/>
            <person name="Bradshaw-Cordum H."/>
            <person name="Ali J."/>
            <person name="Carter J."/>
            <person name="Cordes M."/>
            <person name="Harris A."/>
            <person name="Isak A."/>
            <person name="van Brunt A."/>
            <person name="Nguyen C."/>
            <person name="Du F."/>
            <person name="Courtney L."/>
            <person name="Kalicki J."/>
            <person name="Ozersky P."/>
            <person name="Abbott S."/>
            <person name="Armstrong J."/>
            <person name="Belter E.A."/>
            <person name="Caruso L."/>
            <person name="Cedroni M."/>
            <person name="Cotton M."/>
            <person name="Davidson T."/>
            <person name="Desai A."/>
            <person name="Elliott G."/>
            <person name="Erb T."/>
            <person name="Fronick C."/>
            <person name="Gaige T."/>
            <person name="Haakenson W."/>
            <person name="Haglund K."/>
            <person name="Holmes A."/>
            <person name="Harkins R."/>
            <person name="Kim K."/>
            <person name="Kruchowski S.S."/>
            <person name="Strong C.M."/>
            <person name="Grewal N."/>
            <person name="Goyea E."/>
            <person name="Hou S."/>
            <person name="Levy A."/>
            <person name="Martinka S."/>
            <person name="Mead K."/>
            <person name="McLellan M.D."/>
            <person name="Meyer R."/>
            <person name="Randall-Maher J."/>
            <person name="Tomlinson C."/>
            <person name="Dauphin-Kohlberg S."/>
            <person name="Kozlowicz-Reilly A."/>
            <person name="Shah N."/>
            <person name="Swearengen-Shahid S."/>
            <person name="Snider J."/>
            <person name="Strong J.T."/>
            <person name="Thompson J."/>
            <person name="Yoakum M."/>
            <person name="Leonard S."/>
            <person name="Pearman C."/>
            <person name="Trani L."/>
            <person name="Radionenko M."/>
            <person name="Waligorski J.E."/>
            <person name="Wang C."/>
            <person name="Rock S.M."/>
            <person name="Tin-Wollam A.-M."/>
            <person name="Maupin R."/>
            <person name="Latreille P."/>
            <person name="Wendl M.C."/>
            <person name="Yang S.-P."/>
            <person name="Pohl C."/>
            <person name="Wallis J.W."/>
            <person name="Spieth J."/>
            <person name="Bieri T.A."/>
            <person name="Berkowicz N."/>
            <person name="Nelson J.O."/>
            <person name="Osborne J."/>
            <person name="Ding L."/>
            <person name="Meyer R."/>
            <person name="Sabo A."/>
            <person name="Shotland Y."/>
            <person name="Sinha P."/>
            <person name="Wohldmann P.E."/>
            <person name="Cook L.L."/>
            <person name="Hickenbotham M.T."/>
            <person name="Eldred J."/>
            <person name="Williams D."/>
            <person name="Jones T.A."/>
            <person name="She X."/>
            <person name="Ciccarelli F.D."/>
            <person name="Izaurralde E."/>
            <person name="Taylor J."/>
            <person name="Schmutz J."/>
            <person name="Myers R.M."/>
            <person name="Cox D.R."/>
            <person name="Huang X."/>
            <person name="McPherson J.D."/>
            <person name="Mardis E.R."/>
            <person name="Clifton S.W."/>
            <person name="Warren W.C."/>
            <person name="Chinwalla A.T."/>
            <person name="Eddy S.R."/>
            <person name="Marra M.A."/>
            <person name="Ovcharenko I."/>
            <person name="Furey T.S."/>
            <person name="Miller W."/>
            <person name="Eichler E.E."/>
            <person name="Bork P."/>
            <person name="Suyama M."/>
            <person name="Torrents D."/>
            <person name="Waterston R.H."/>
            <person name="Wilson R.K."/>
        </authorList>
    </citation>
    <scope>NUCLEOTIDE SEQUENCE [LARGE SCALE GENOMIC DNA]</scope>
</reference>
<reference key="4">
    <citation type="journal article" date="2004" name="Genome Res.">
        <title>The status, quality, and expansion of the NIH full-length cDNA project: the Mammalian Gene Collection (MGC).</title>
        <authorList>
            <consortium name="The MGC Project Team"/>
        </authorList>
    </citation>
    <scope>NUCLEOTIDE SEQUENCE [LARGE SCALE MRNA] (ISOFORM 1)</scope>
    <source>
        <tissue>Muscle</tissue>
    </source>
</reference>
<reference key="5">
    <citation type="submission" date="2009-03" db="UniProtKB">
        <authorList>
            <person name="Bienvenut W.V."/>
            <person name="Waridel P."/>
            <person name="Quadroni M."/>
        </authorList>
    </citation>
    <scope>PROTEIN SEQUENCE OF 2-17; 182-190 AND 226-267</scope>
    <scope>CLEAVAGE OF INITIATOR METHIONINE</scope>
    <scope>ACETYLATION AT ALA-2</scope>
    <scope>IDENTIFICATION BY MASS SPECTROMETRY</scope>
    <source>
        <tissue>Embryonic kidney</tissue>
    </source>
</reference>
<reference key="6">
    <citation type="journal article" date="2001" name="Yeast">
        <title>Characterization of 16 novel human genes showing high similarity to yeast sequences.</title>
        <authorList>
            <person name="Stanchi F."/>
            <person name="Bertocco E."/>
            <person name="Toppo S."/>
            <person name="Dioguardi R."/>
            <person name="Simionati B."/>
            <person name="Cannata N."/>
            <person name="Zimbello R."/>
            <person name="Lanfranchi G."/>
            <person name="Valle G."/>
        </authorList>
    </citation>
    <scope>NUCLEOTIDE SEQUENCE [MRNA] OF 17-374 (ISOFORM 1)</scope>
    <source>
        <tissue>Liver</tissue>
        <tissue>Spleen</tissue>
    </source>
</reference>
<reference key="7">
    <citation type="journal article" date="2007" name="Mol. Cell">
        <title>Systematic analysis of the protein interaction network for the human transcription machinery reveals the identity of the 7SK capping enzyme.</title>
        <authorList>
            <person name="Jeronimo C."/>
            <person name="Forget D."/>
            <person name="Bouchard A."/>
            <person name="Li Q."/>
            <person name="Chua G."/>
            <person name="Poitras C."/>
            <person name="Therien C."/>
            <person name="Bergeron D."/>
            <person name="Bourassa S."/>
            <person name="Greenblatt J."/>
            <person name="Chabot B."/>
            <person name="Poirier G.G."/>
            <person name="Hughes T.R."/>
            <person name="Blanchette M."/>
            <person name="Price D.H."/>
            <person name="Coulombe B."/>
        </authorList>
    </citation>
    <scope>FUNCTION</scope>
    <scope>IDENTIFICATION BY MASS SPECTROMETRY</scope>
    <scope>IDENTIFICATION IN THE RNA POLYMERASE II COMPLEX</scope>
</reference>
<reference key="8">
    <citation type="journal article" date="2008" name="J. Proteome Res.">
        <title>Combining protein-based IMAC, peptide-based IMAC, and MudPIT for efficient phosphoproteomic analysis.</title>
        <authorList>
            <person name="Cantin G.T."/>
            <person name="Yi W."/>
            <person name="Lu B."/>
            <person name="Park S.K."/>
            <person name="Xu T."/>
            <person name="Lee J.-D."/>
            <person name="Yates J.R. III"/>
        </authorList>
    </citation>
    <scope>IDENTIFICATION BY MASS SPECTROMETRY [LARGE SCALE ANALYSIS]</scope>
    <source>
        <tissue>Cervix carcinoma</tissue>
    </source>
</reference>
<reference key="9">
    <citation type="journal article" date="2008" name="Mol. Cell">
        <title>Kinase-selective enrichment enables quantitative phosphoproteomics of the kinome across the cell cycle.</title>
        <authorList>
            <person name="Daub H."/>
            <person name="Olsen J.V."/>
            <person name="Bairlein M."/>
            <person name="Gnad F."/>
            <person name="Oppermann F.S."/>
            <person name="Korner R."/>
            <person name="Greff Z."/>
            <person name="Keri G."/>
            <person name="Stemmann O."/>
            <person name="Mann M."/>
        </authorList>
    </citation>
    <scope>IDENTIFICATION BY MASS SPECTROMETRY [LARGE SCALE ANALYSIS]</scope>
    <source>
        <tissue>Cervix carcinoma</tissue>
    </source>
</reference>
<reference key="10">
    <citation type="journal article" date="2008" name="Proc. Natl. Acad. Sci. U.S.A.">
        <title>A quantitative atlas of mitotic phosphorylation.</title>
        <authorList>
            <person name="Dephoure N."/>
            <person name="Zhou C."/>
            <person name="Villen J."/>
            <person name="Beausoleil S.A."/>
            <person name="Bakalarski C.E."/>
            <person name="Elledge S.J."/>
            <person name="Gygi S.P."/>
        </authorList>
    </citation>
    <scope>PHOSPHORYLATION [LARGE SCALE ANALYSIS] AT SER-312; SER-314 AND SER-338</scope>
    <scope>IDENTIFICATION BY MASS SPECTROMETRY [LARGE SCALE ANALYSIS]</scope>
    <source>
        <tissue>Cervix carcinoma</tissue>
    </source>
</reference>
<reference key="11">
    <citation type="journal article" date="2009" name="Anal. Chem.">
        <title>Lys-N and trypsin cover complementary parts of the phosphoproteome in a refined SCX-based approach.</title>
        <authorList>
            <person name="Gauci S."/>
            <person name="Helbig A.O."/>
            <person name="Slijper M."/>
            <person name="Krijgsveld J."/>
            <person name="Heck A.J."/>
            <person name="Mohammed S."/>
        </authorList>
    </citation>
    <scope>IDENTIFICATION BY MASS SPECTROMETRY [LARGE SCALE ANALYSIS]</scope>
</reference>
<reference key="12">
    <citation type="journal article" date="2010" name="Mol. Cell. Proteomics">
        <title>The protein interaction network of the human transcription machinery reveals a role for the conserved GTPase RPAP4/GPN1 and microtubule assembly in nuclear import and biogenesis of RNA polymerase II.</title>
        <authorList>
            <person name="Forget D."/>
            <person name="Lacombe A.A."/>
            <person name="Cloutier P."/>
            <person name="Al-Khoury R."/>
            <person name="Bouchard A."/>
            <person name="Lavallee-Adam M."/>
            <person name="Faubert D."/>
            <person name="Jeronimo C."/>
            <person name="Blanchette M."/>
            <person name="Coulombe B."/>
        </authorList>
    </citation>
    <scope>FUNCTION</scope>
    <scope>SUBCELLULAR LOCATION</scope>
    <scope>BINDING TO RNA POLYMERASE II</scope>
</reference>
<reference key="13">
    <citation type="journal article" date="2010" name="Mol. Cell">
        <title>HSP90 and its R2TP/Prefoldin-like cochaperone are involved in the cytoplasmic assembly of RNA polymerase II.</title>
        <authorList>
            <person name="Boulon S."/>
            <person name="Pradet-Balade B."/>
            <person name="Verheggen C."/>
            <person name="Molle D."/>
            <person name="Boireau S."/>
            <person name="Georgieva M."/>
            <person name="Azzag K."/>
            <person name="Robert M.C."/>
            <person name="Ahmad Y."/>
            <person name="Neel H."/>
            <person name="Lamond A.I."/>
            <person name="Bertrand E."/>
        </authorList>
    </citation>
    <scope>BINDING TO RNA POLYMERASE II</scope>
</reference>
<reference key="14">
    <citation type="journal article" date="2010" name="Sci. Signal.">
        <title>Quantitative phosphoproteomics reveals widespread full phosphorylation site occupancy during mitosis.</title>
        <authorList>
            <person name="Olsen J.V."/>
            <person name="Vermeulen M."/>
            <person name="Santamaria A."/>
            <person name="Kumar C."/>
            <person name="Miller M.L."/>
            <person name="Jensen L.J."/>
            <person name="Gnad F."/>
            <person name="Cox J."/>
            <person name="Jensen T.S."/>
            <person name="Nigg E.A."/>
            <person name="Brunak S."/>
            <person name="Mann M."/>
        </authorList>
    </citation>
    <scope>PHOSPHORYLATION [LARGE SCALE ANALYSIS] AT SER-314 AND SER-338</scope>
    <scope>IDENTIFICATION BY MASS SPECTROMETRY [LARGE SCALE ANALYSIS]</scope>
    <source>
        <tissue>Cervix carcinoma</tissue>
    </source>
</reference>
<reference key="15">
    <citation type="journal article" date="2011" name="BMC Syst. Biol.">
        <title>Initial characterization of the human central proteome.</title>
        <authorList>
            <person name="Burkard T.R."/>
            <person name="Planyavsky M."/>
            <person name="Kaupe I."/>
            <person name="Breitwieser F.P."/>
            <person name="Buerckstuemmer T."/>
            <person name="Bennett K.L."/>
            <person name="Superti-Furga G."/>
            <person name="Colinge J."/>
        </authorList>
    </citation>
    <scope>IDENTIFICATION BY MASS SPECTROMETRY [LARGE SCALE ANALYSIS]</scope>
</reference>
<reference key="16">
    <citation type="journal article" date="2011" name="J. Biol. Chem.">
        <title>GTP-dependent binding and nuclear transport of RNA polymerase II by Npa3 protein.</title>
        <authorList>
            <person name="Staresincic L."/>
            <person name="Walker J."/>
            <person name="Dirac-Svejstrup A.B."/>
            <person name="Mitter R."/>
            <person name="Svejstrup J.Q."/>
        </authorList>
    </citation>
    <scope>BINDING TO RNA POLYMERASE II</scope>
</reference>
<reference key="17">
    <citation type="journal article" date="2011" name="Mol. Cell. Biol.">
        <title>Human GTPases associate with RNA polymerase II to mediate its nuclear import.</title>
        <authorList>
            <person name="Carre C."/>
            <person name="Shiekhattar R."/>
        </authorList>
    </citation>
    <scope>FUNCTION</scope>
    <scope>BINDING TO RNA POLYMERASE II</scope>
    <scope>INTERACTION WITH GPN3; RPB1; RPB4 AND RPB7</scope>
    <scope>CATALYTIC ACTIVITY</scope>
    <scope>MUTAGENESIS OF 29-GLY--LYS-32</scope>
</reference>
<reference key="18">
    <citation type="journal article" date="2011" name="Sci. Signal.">
        <title>System-wide temporal characterization of the proteome and phosphoproteome of human embryonic stem cell differentiation.</title>
        <authorList>
            <person name="Rigbolt K.T."/>
            <person name="Prokhorova T.A."/>
            <person name="Akimov V."/>
            <person name="Henningsen J."/>
            <person name="Johansen P.T."/>
            <person name="Kratchmarova I."/>
            <person name="Kassem M."/>
            <person name="Mann M."/>
            <person name="Olsen J.V."/>
            <person name="Blagoev B."/>
        </authorList>
    </citation>
    <scope>PHOSPHORYLATION [LARGE SCALE ANALYSIS] AT SER-314 AND SER-338</scope>
    <scope>IDENTIFICATION BY MASS SPECTROMETRY [LARGE SCALE ANALYSIS]</scope>
</reference>
<reference key="19">
    <citation type="journal article" date="2012" name="Mol. Cell. Proteomics">
        <title>Comparative large-scale characterisation of plant vs. mammal proteins reveals similar and idiosyncratic N-alpha acetylation features.</title>
        <authorList>
            <person name="Bienvenut W.V."/>
            <person name="Sumpton D."/>
            <person name="Martinez A."/>
            <person name="Lilla S."/>
            <person name="Espagne C."/>
            <person name="Meinnel T."/>
            <person name="Giglione C."/>
        </authorList>
    </citation>
    <scope>ACETYLATION [LARGE SCALE ANALYSIS] AT ALA-2</scope>
    <scope>CLEAVAGE OF INITIATOR METHIONINE [LARGE SCALE ANALYSIS]</scope>
    <scope>IDENTIFICATION BY MASS SPECTROMETRY [LARGE SCALE ANALYSIS]</scope>
</reference>
<reference key="20">
    <citation type="journal article" date="2012" name="Proc. Natl. Acad. Sci. U.S.A.">
        <title>N-terminal acetylome analyses and functional insights of the N-terminal acetyltransferase NatB.</title>
        <authorList>
            <person name="Van Damme P."/>
            <person name="Lasa M."/>
            <person name="Polevoda B."/>
            <person name="Gazquez C."/>
            <person name="Elosegui-Artola A."/>
            <person name="Kim D.S."/>
            <person name="De Juan-Pardo E."/>
            <person name="Demeyer K."/>
            <person name="Hole K."/>
            <person name="Larrea E."/>
            <person name="Timmerman E."/>
            <person name="Prieto J."/>
            <person name="Arnesen T."/>
            <person name="Sherman F."/>
            <person name="Gevaert K."/>
            <person name="Aldabe R."/>
        </authorList>
    </citation>
    <scope>ACETYLATION [LARGE SCALE ANALYSIS] AT ALA-2</scope>
    <scope>CLEAVAGE OF INITIATOR METHIONINE [LARGE SCALE ANALYSIS]</scope>
    <scope>IDENTIFICATION BY MASS SPECTROMETRY [LARGE SCALE ANALYSIS]</scope>
</reference>
<reference key="21">
    <citation type="journal article" date="2013" name="J. Proteome Res.">
        <title>Toward a comprehensive characterization of a human cancer cell phosphoproteome.</title>
        <authorList>
            <person name="Zhou H."/>
            <person name="Di Palma S."/>
            <person name="Preisinger C."/>
            <person name="Peng M."/>
            <person name="Polat A.N."/>
            <person name="Heck A.J."/>
            <person name="Mohammed S."/>
        </authorList>
    </citation>
    <scope>PHOSPHORYLATION [LARGE SCALE ANALYSIS] AT SER-301; SER-314 AND THR-340</scope>
    <scope>IDENTIFICATION BY MASS SPECTROMETRY [LARGE SCALE ANALYSIS]</scope>
    <source>
        <tissue>Cervix carcinoma</tissue>
        <tissue>Erythroleukemia</tissue>
    </source>
</reference>
<reference key="22">
    <citation type="journal article" date="2014" name="J. Proteomics">
        <title>An enzyme assisted RP-RPLC approach for in-depth analysis of human liver phosphoproteome.</title>
        <authorList>
            <person name="Bian Y."/>
            <person name="Song C."/>
            <person name="Cheng K."/>
            <person name="Dong M."/>
            <person name="Wang F."/>
            <person name="Huang J."/>
            <person name="Sun D."/>
            <person name="Wang L."/>
            <person name="Ye M."/>
            <person name="Zou H."/>
        </authorList>
    </citation>
    <scope>PHOSPHORYLATION [LARGE SCALE ANALYSIS] AT SER-312; THR-328; SER-338 AND THR-340</scope>
    <scope>IDENTIFICATION BY MASS SPECTROMETRY [LARGE SCALE ANALYSIS]</scope>
    <source>
        <tissue>Liver</tissue>
    </source>
</reference>
<sequence>MAASAAAAELQASGGPRHPVCLLVLGMAGSGKTTFVQRLTGHLHAQGTPPYVINLDPAVHEVPFPANIDIRDTVKYKEVMKQYGLGPNGGIVTSLNLFATRFDQVMKFIEKAQNMSKYVLIDTPGQIEVFTWSASGTIITEALASSFPTVVIYVMDTSRSTNPVTFMSNMLYACSILYKTKLPFIVVMNKTDIIDHSFAVEWMQDFEAFQDALNQETTYVSNLTRSMSLVLDEFYSSLRVVGVSAVLGTGLDELFVQVTSAAEEYEREYRPEYERLKKSLANAESQQQREQLERLRKDMGSVALDAGTAKDSLSPVLHPSDLILTRGTLDEEDEEADSDTDDIDHRVTEESHEEPAFQNFMQESMAQYWKRNNK</sequence>
<accession>Q9HCN4</accession>
<accession>B4DQJ5</accession>
<accession>B4DQM4</accession>
<accession>B4DXU4</accession>
<accession>B5MBZ5</accession>
<accession>O76004</accession>
<comment type="function">
    <text evidence="4 5 7 14">Small GTPase required for proper nuclear import of RNA polymerase II (RNAPII) (PubMed:20855544, PubMed:21768307). May act at an RNAP assembly step prior to nuclear import (PubMed:21768307). Forms an interface between the RNA polymerase II enzyme and chaperone/scaffolding proteins, suggesting that it is required to connect RNA polymerase II to regulators of protein complex formation (PubMed:17643375). May be involved in nuclear localization of XPA (PubMed:11058119).</text>
</comment>
<comment type="subunit">
    <text evidence="3 4 6 7 8">Heterodimer with GPN3 (PubMed:21768307). Binds to RNA polymerase II (RNAPII) (PubMed:17643375, PubMed:20864038, PubMed:21844196). Interacts directly with RNAPII subunits RPB4 and RPB7 and the CTD of RPB1 (PubMed:21768307). Interacts with XPA (PubMed:11058119).</text>
</comment>
<comment type="interaction">
    <interactant intactId="EBI-745137">
        <id>Q9HCN4</id>
    </interactant>
    <interactant intactId="EBI-11603368">
        <id>Q9H9Y4</id>
        <label>GPN2</label>
    </interactant>
    <organismsDiffer>false</organismsDiffer>
    <experiments>6</experiments>
</comment>
<comment type="interaction">
    <interactant intactId="EBI-745137">
        <id>Q9HCN4</id>
    </interactant>
    <interactant intactId="EBI-395491">
        <id>Q9UHW5</id>
        <label>GPN3</label>
    </interactant>
    <organismsDiffer>false</organismsDiffer>
    <experiments>5</experiments>
</comment>
<comment type="interaction">
    <interactant intactId="EBI-745137">
        <id>Q9HCN4</id>
    </interactant>
    <interactant intactId="EBI-395878">
        <id>Q8IXW5</id>
        <label>RPAP2</label>
    </interactant>
    <organismsDiffer>false</organismsDiffer>
    <experiments>9</experiments>
</comment>
<comment type="subcellular location">
    <subcellularLocation>
        <location evidence="3 5">Cytoplasm</location>
    </subcellularLocation>
    <subcellularLocation>
        <location evidence="5">Nucleus</location>
    </subcellularLocation>
    <text evidence="5">Shuttles between the nucleus and the cytoplasm.</text>
</comment>
<comment type="alternative products">
    <event type="alternative splicing"/>
    <isoform>
        <id>Q9HCN4-1</id>
        <name>1</name>
        <sequence type="displayed"/>
    </isoform>
    <isoform>
        <id>Q9HCN4-2</id>
        <name>2</name>
        <sequence type="described" ref="VSP_042750"/>
    </isoform>
    <isoform>
        <id>Q9HCN4-3</id>
        <name>3</name>
        <sequence type="described" ref="VSP_042749"/>
    </isoform>
    <isoform>
        <id>Q9HCN4-4</id>
        <name>4</name>
        <sequence type="described" ref="VSP_046176"/>
    </isoform>
    <isoform>
        <id>Q9HCN4-5</id>
        <name>5</name>
        <sequence type="described" ref="VSP_054366"/>
    </isoform>
</comment>
<comment type="tissue specificity">
    <text>Expressed ubiquitously.</text>
</comment>
<comment type="similarity">
    <text evidence="13">Belongs to the GPN-loop GTPase family.</text>
</comment>